<protein>
    <recommendedName>
        <fullName evidence="1">Replication factor C large subunit</fullName>
        <shortName evidence="1">RFC large subunit</shortName>
    </recommendedName>
    <alternativeName>
        <fullName evidence="1">Clamp loader large subunit</fullName>
    </alternativeName>
</protein>
<keyword id="KW-0067">ATP-binding</keyword>
<keyword id="KW-0235">DNA replication</keyword>
<keyword id="KW-0547">Nucleotide-binding</keyword>
<comment type="function">
    <text evidence="1">Part of the RFC clamp loader complex which loads the PCNA sliding clamp onto DNA.</text>
</comment>
<comment type="subunit">
    <text evidence="1">Heteromultimer composed of small subunits (RfcS) and large subunits (RfcL).</text>
</comment>
<comment type="similarity">
    <text evidence="1">Belongs to the activator 1 small subunits family. RfcL subfamily.</text>
</comment>
<feature type="chain" id="PRO_0000318542" description="Replication factor C large subunit">
    <location>
        <begin position="1"/>
        <end position="492"/>
    </location>
</feature>
<feature type="region of interest" description="Disordered" evidence="2">
    <location>
        <begin position="445"/>
        <end position="492"/>
    </location>
</feature>
<feature type="compositionally biased region" description="Basic and acidic residues" evidence="2">
    <location>
        <begin position="461"/>
        <end position="482"/>
    </location>
</feature>
<feature type="binding site" evidence="1">
    <location>
        <begin position="46"/>
        <end position="53"/>
    </location>
    <ligand>
        <name>ATP</name>
        <dbReference type="ChEBI" id="CHEBI:30616"/>
    </ligand>
</feature>
<reference key="1">
    <citation type="submission" date="2007-06" db="EMBL/GenBank/DDBJ databases">
        <title>Complete sequence of Methanococcus vannielii SB.</title>
        <authorList>
            <consortium name="US DOE Joint Genome Institute"/>
            <person name="Copeland A."/>
            <person name="Lucas S."/>
            <person name="Lapidus A."/>
            <person name="Barry K."/>
            <person name="Glavina del Rio T."/>
            <person name="Dalin E."/>
            <person name="Tice H."/>
            <person name="Pitluck S."/>
            <person name="Chain P."/>
            <person name="Malfatti S."/>
            <person name="Shin M."/>
            <person name="Vergez L."/>
            <person name="Schmutz J."/>
            <person name="Larimer F."/>
            <person name="Land M."/>
            <person name="Hauser L."/>
            <person name="Kyrpides N."/>
            <person name="Anderson I."/>
            <person name="Sieprawska-Lupa M."/>
            <person name="Whitman W.B."/>
            <person name="Richardson P."/>
        </authorList>
    </citation>
    <scope>NUCLEOTIDE SEQUENCE [LARGE SCALE GENOMIC DNA]</scope>
    <source>
        <strain>ATCC 35089 / DSM 1224 / JCM 13029 / OCM 148 / SB</strain>
    </source>
</reference>
<sequence>MEEWVEKYRPKSLNDVAGHSKTKEALCYWIESFIRGNKQKPVLLFGPPGSGKTTMAHAIANDYNFDVIELNASDKRNKDVISQVVGTAATSKSLTGKRTLIVLDEVDGLSGNDDRGGVSEIIKVLKNAENPVILTANDVYKPALSSLRNSVTMVDAGSVHTNSIPPVLRKIALKEGFEIDEKVIKLISSHAGGDLRAAINDLQALLTGGSIEIEDAKNLPDRDSEKSIFDAIRIIMKTTHYDIATSATVDLKEELGTVSEWISENLPKEYLKYGDLAKGYDYLSKSDVFLGRVYRRQYFGLWRYASALMTAGTALSKEDKYRGFTRYSPPTVFTKLSRTKVAREKLKEILKKIGIKTHTSIKGARSTLDFLYVIFESNLQMATDLTLYYEFTKEEVEFLTNKKISKDIFSIIECEKTKKTDDKNLMKKDLEEDTFKEKTNEIMPVIPKRPKISDNQISEILTKDNNPKDDVKKASKKPESTSKKQATLDKFF</sequence>
<accession>A6URV8</accession>
<gene>
    <name evidence="1" type="primary">rfcL</name>
    <name type="ordered locus">Mevan_1333</name>
</gene>
<organism>
    <name type="scientific">Methanococcus vannielii (strain ATCC 35089 / DSM 1224 / JCM 13029 / OCM 148 / SB)</name>
    <dbReference type="NCBI Taxonomy" id="406327"/>
    <lineage>
        <taxon>Archaea</taxon>
        <taxon>Methanobacteriati</taxon>
        <taxon>Methanobacteriota</taxon>
        <taxon>Methanomada group</taxon>
        <taxon>Methanococci</taxon>
        <taxon>Methanococcales</taxon>
        <taxon>Methanococcaceae</taxon>
        <taxon>Methanococcus</taxon>
    </lineage>
</organism>
<evidence type="ECO:0000255" key="1">
    <source>
        <dbReference type="HAMAP-Rule" id="MF_01508"/>
    </source>
</evidence>
<evidence type="ECO:0000256" key="2">
    <source>
        <dbReference type="SAM" id="MobiDB-lite"/>
    </source>
</evidence>
<dbReference type="EMBL" id="CP000742">
    <property type="protein sequence ID" value="ABR55230.1"/>
    <property type="molecule type" value="Genomic_DNA"/>
</dbReference>
<dbReference type="RefSeq" id="WP_012066145.1">
    <property type="nucleotide sequence ID" value="NC_009634.1"/>
</dbReference>
<dbReference type="SMR" id="A6URV8"/>
<dbReference type="STRING" id="406327.Mevan_1333"/>
<dbReference type="GeneID" id="5324713"/>
<dbReference type="KEGG" id="mvn:Mevan_1333"/>
<dbReference type="eggNOG" id="arCOG00470">
    <property type="taxonomic scope" value="Archaea"/>
</dbReference>
<dbReference type="HOGENOM" id="CLU_027255_1_0_2"/>
<dbReference type="OrthoDB" id="8658at2157"/>
<dbReference type="Proteomes" id="UP000001107">
    <property type="component" value="Chromosome"/>
</dbReference>
<dbReference type="GO" id="GO:0005524">
    <property type="term" value="F:ATP binding"/>
    <property type="evidence" value="ECO:0007669"/>
    <property type="project" value="UniProtKB-UniRule"/>
</dbReference>
<dbReference type="GO" id="GO:0016887">
    <property type="term" value="F:ATP hydrolysis activity"/>
    <property type="evidence" value="ECO:0007669"/>
    <property type="project" value="InterPro"/>
</dbReference>
<dbReference type="GO" id="GO:0003689">
    <property type="term" value="F:DNA clamp loader activity"/>
    <property type="evidence" value="ECO:0007669"/>
    <property type="project" value="UniProtKB-UniRule"/>
</dbReference>
<dbReference type="GO" id="GO:0006260">
    <property type="term" value="P:DNA replication"/>
    <property type="evidence" value="ECO:0007669"/>
    <property type="project" value="UniProtKB-UniRule"/>
</dbReference>
<dbReference type="CDD" id="cd00009">
    <property type="entry name" value="AAA"/>
    <property type="match status" value="1"/>
</dbReference>
<dbReference type="CDD" id="cd18140">
    <property type="entry name" value="HLD_clamp_RFC"/>
    <property type="match status" value="1"/>
</dbReference>
<dbReference type="Gene3D" id="1.10.8.60">
    <property type="match status" value="1"/>
</dbReference>
<dbReference type="Gene3D" id="3.40.50.300">
    <property type="entry name" value="P-loop containing nucleotide triphosphate hydrolases"/>
    <property type="match status" value="1"/>
</dbReference>
<dbReference type="HAMAP" id="MF_01508">
    <property type="entry name" value="RfcL"/>
    <property type="match status" value="1"/>
</dbReference>
<dbReference type="InterPro" id="IPR003593">
    <property type="entry name" value="AAA+_ATPase"/>
</dbReference>
<dbReference type="InterPro" id="IPR003959">
    <property type="entry name" value="ATPase_AAA_core"/>
</dbReference>
<dbReference type="InterPro" id="IPR027417">
    <property type="entry name" value="P-loop_NTPase"/>
</dbReference>
<dbReference type="InterPro" id="IPR023935">
    <property type="entry name" value="Rep_factor-C_lsu"/>
</dbReference>
<dbReference type="InterPro" id="IPR047854">
    <property type="entry name" value="RFC_lid"/>
</dbReference>
<dbReference type="NCBIfam" id="NF003229">
    <property type="entry name" value="PRK04195.1-5"/>
    <property type="match status" value="1"/>
</dbReference>
<dbReference type="NCBIfam" id="NF003230">
    <property type="entry name" value="PRK04195.1-6"/>
    <property type="match status" value="1"/>
</dbReference>
<dbReference type="PANTHER" id="PTHR23389">
    <property type="entry name" value="CHROMOSOME TRANSMISSION FIDELITY FACTOR 18"/>
    <property type="match status" value="1"/>
</dbReference>
<dbReference type="PANTHER" id="PTHR23389:SF6">
    <property type="entry name" value="REPLICATION FACTOR C SUBUNIT 1"/>
    <property type="match status" value="1"/>
</dbReference>
<dbReference type="Pfam" id="PF00004">
    <property type="entry name" value="AAA"/>
    <property type="match status" value="1"/>
</dbReference>
<dbReference type="Pfam" id="PF21960">
    <property type="entry name" value="RCF1-5-like_lid"/>
    <property type="match status" value="1"/>
</dbReference>
<dbReference type="SMART" id="SM00382">
    <property type="entry name" value="AAA"/>
    <property type="match status" value="1"/>
</dbReference>
<dbReference type="SUPFAM" id="SSF52540">
    <property type="entry name" value="P-loop containing nucleoside triphosphate hydrolases"/>
    <property type="match status" value="1"/>
</dbReference>
<name>RFCL_METVS</name>
<proteinExistence type="inferred from homology"/>